<feature type="chain" id="PRO_1000022933" description="2-C-methyl-D-erythritol 4-phosphate cytidylyltransferase">
    <location>
        <begin position="1"/>
        <end position="229"/>
    </location>
</feature>
<feature type="site" description="Transition state stabilizer" evidence="1">
    <location>
        <position position="17"/>
    </location>
</feature>
<feature type="site" description="Transition state stabilizer" evidence="1">
    <location>
        <position position="24"/>
    </location>
</feature>
<feature type="site" description="Positions MEP for the nucleophilic attack" evidence="1">
    <location>
        <position position="158"/>
    </location>
</feature>
<feature type="site" description="Positions MEP for the nucleophilic attack" evidence="1">
    <location>
        <position position="212"/>
    </location>
</feature>
<gene>
    <name evidence="1" type="primary">ispD</name>
    <name type="ordered locus">NMC1442</name>
</gene>
<keyword id="KW-0414">Isoprene biosynthesis</keyword>
<keyword id="KW-0548">Nucleotidyltransferase</keyword>
<keyword id="KW-0808">Transferase</keyword>
<sequence>MKRKNIALIPAAGIGARFGADKPKQYVEIGSKTVLEHTLGIFERHEGVDLTVVVVSPEDTFADKVQTAFPQVRVWKNGGQTRAETVRNGVAKLLETGLAAETDNILVHDAARCCLPSEALTRLIEQAGNAAEGGILAIPVADTLKRADGGNISATVERTSLWQAQTPQLFRAGLLHRALAAENLDGITDEASAVEKLGIHPLLVQGDARNLKLTQPQDAYIVRLLLDAV</sequence>
<name>ISPD_NEIMF</name>
<protein>
    <recommendedName>
        <fullName evidence="1">2-C-methyl-D-erythritol 4-phosphate cytidylyltransferase</fullName>
        <ecNumber evidence="1">2.7.7.60</ecNumber>
    </recommendedName>
    <alternativeName>
        <fullName evidence="1">4-diphosphocytidyl-2C-methyl-D-erythritol synthase</fullName>
    </alternativeName>
    <alternativeName>
        <fullName evidence="1">MEP cytidylyltransferase</fullName>
        <shortName evidence="1">MCT</shortName>
    </alternativeName>
</protein>
<accession>A1KUV0</accession>
<proteinExistence type="inferred from homology"/>
<dbReference type="EC" id="2.7.7.60" evidence="1"/>
<dbReference type="EMBL" id="AM421808">
    <property type="protein sequence ID" value="CAM10649.1"/>
    <property type="molecule type" value="Genomic_DNA"/>
</dbReference>
<dbReference type="RefSeq" id="WP_002212881.1">
    <property type="nucleotide sequence ID" value="NC_008767.1"/>
</dbReference>
<dbReference type="SMR" id="A1KUV0"/>
<dbReference type="KEGG" id="nmc:NMC1442"/>
<dbReference type="HOGENOM" id="CLU_061281_3_0_4"/>
<dbReference type="UniPathway" id="UPA00056">
    <property type="reaction ID" value="UER00093"/>
</dbReference>
<dbReference type="Proteomes" id="UP000002286">
    <property type="component" value="Chromosome"/>
</dbReference>
<dbReference type="GO" id="GO:0050518">
    <property type="term" value="F:2-C-methyl-D-erythritol 4-phosphate cytidylyltransferase activity"/>
    <property type="evidence" value="ECO:0007669"/>
    <property type="project" value="UniProtKB-UniRule"/>
</dbReference>
<dbReference type="GO" id="GO:0019288">
    <property type="term" value="P:isopentenyl diphosphate biosynthetic process, methylerythritol 4-phosphate pathway"/>
    <property type="evidence" value="ECO:0007669"/>
    <property type="project" value="UniProtKB-UniRule"/>
</dbReference>
<dbReference type="CDD" id="cd02516">
    <property type="entry name" value="CDP-ME_synthetase"/>
    <property type="match status" value="1"/>
</dbReference>
<dbReference type="FunFam" id="3.90.550.10:FF:000003">
    <property type="entry name" value="2-C-methyl-D-erythritol 4-phosphate cytidylyltransferase"/>
    <property type="match status" value="1"/>
</dbReference>
<dbReference type="Gene3D" id="3.90.550.10">
    <property type="entry name" value="Spore Coat Polysaccharide Biosynthesis Protein SpsA, Chain A"/>
    <property type="match status" value="1"/>
</dbReference>
<dbReference type="HAMAP" id="MF_00108">
    <property type="entry name" value="IspD"/>
    <property type="match status" value="1"/>
</dbReference>
<dbReference type="InterPro" id="IPR001228">
    <property type="entry name" value="IspD"/>
</dbReference>
<dbReference type="InterPro" id="IPR034683">
    <property type="entry name" value="IspD/TarI"/>
</dbReference>
<dbReference type="InterPro" id="IPR050088">
    <property type="entry name" value="IspD/TarI_cytidylyltransf_bact"/>
</dbReference>
<dbReference type="InterPro" id="IPR018294">
    <property type="entry name" value="ISPD_synthase_CS"/>
</dbReference>
<dbReference type="InterPro" id="IPR029044">
    <property type="entry name" value="Nucleotide-diphossugar_trans"/>
</dbReference>
<dbReference type="NCBIfam" id="TIGR00453">
    <property type="entry name" value="ispD"/>
    <property type="match status" value="1"/>
</dbReference>
<dbReference type="PANTHER" id="PTHR32125">
    <property type="entry name" value="2-C-METHYL-D-ERYTHRITOL 4-PHOSPHATE CYTIDYLYLTRANSFERASE, CHLOROPLASTIC"/>
    <property type="match status" value="1"/>
</dbReference>
<dbReference type="PANTHER" id="PTHR32125:SF4">
    <property type="entry name" value="2-C-METHYL-D-ERYTHRITOL 4-PHOSPHATE CYTIDYLYLTRANSFERASE, CHLOROPLASTIC"/>
    <property type="match status" value="1"/>
</dbReference>
<dbReference type="Pfam" id="PF01128">
    <property type="entry name" value="IspD"/>
    <property type="match status" value="1"/>
</dbReference>
<dbReference type="SUPFAM" id="SSF53448">
    <property type="entry name" value="Nucleotide-diphospho-sugar transferases"/>
    <property type="match status" value="1"/>
</dbReference>
<dbReference type="PROSITE" id="PS01295">
    <property type="entry name" value="ISPD"/>
    <property type="match status" value="1"/>
</dbReference>
<comment type="function">
    <text evidence="1">Catalyzes the formation of 4-diphosphocytidyl-2-C-methyl-D-erythritol from CTP and 2-C-methyl-D-erythritol 4-phosphate (MEP).</text>
</comment>
<comment type="catalytic activity">
    <reaction evidence="1">
        <text>2-C-methyl-D-erythritol 4-phosphate + CTP + H(+) = 4-CDP-2-C-methyl-D-erythritol + diphosphate</text>
        <dbReference type="Rhea" id="RHEA:13429"/>
        <dbReference type="ChEBI" id="CHEBI:15378"/>
        <dbReference type="ChEBI" id="CHEBI:33019"/>
        <dbReference type="ChEBI" id="CHEBI:37563"/>
        <dbReference type="ChEBI" id="CHEBI:57823"/>
        <dbReference type="ChEBI" id="CHEBI:58262"/>
        <dbReference type="EC" id="2.7.7.60"/>
    </reaction>
</comment>
<comment type="pathway">
    <text evidence="1">Isoprenoid biosynthesis; isopentenyl diphosphate biosynthesis via DXP pathway; isopentenyl diphosphate from 1-deoxy-D-xylulose 5-phosphate: step 2/6.</text>
</comment>
<comment type="similarity">
    <text evidence="1">Belongs to the IspD/TarI cytidylyltransferase family. IspD subfamily.</text>
</comment>
<evidence type="ECO:0000255" key="1">
    <source>
        <dbReference type="HAMAP-Rule" id="MF_00108"/>
    </source>
</evidence>
<reference key="1">
    <citation type="journal article" date="2007" name="PLoS Genet.">
        <title>Meningococcal genetic variation mechanisms viewed through comparative analysis of serogroup C strain FAM18.</title>
        <authorList>
            <person name="Bentley S.D."/>
            <person name="Vernikos G.S."/>
            <person name="Snyder L.A.S."/>
            <person name="Churcher C."/>
            <person name="Arrowsmith C."/>
            <person name="Chillingworth T."/>
            <person name="Cronin A."/>
            <person name="Davis P.H."/>
            <person name="Holroyd N.E."/>
            <person name="Jagels K."/>
            <person name="Maddison M."/>
            <person name="Moule S."/>
            <person name="Rabbinowitsch E."/>
            <person name="Sharp S."/>
            <person name="Unwin L."/>
            <person name="Whitehead S."/>
            <person name="Quail M.A."/>
            <person name="Achtman M."/>
            <person name="Barrell B.G."/>
            <person name="Saunders N.J."/>
            <person name="Parkhill J."/>
        </authorList>
    </citation>
    <scope>NUCLEOTIDE SEQUENCE [LARGE SCALE GENOMIC DNA]</scope>
    <source>
        <strain>ATCC 700532 / DSM 15464 / FAM18</strain>
    </source>
</reference>
<organism>
    <name type="scientific">Neisseria meningitidis serogroup C / serotype 2a (strain ATCC 700532 / DSM 15464 / FAM18)</name>
    <dbReference type="NCBI Taxonomy" id="272831"/>
    <lineage>
        <taxon>Bacteria</taxon>
        <taxon>Pseudomonadati</taxon>
        <taxon>Pseudomonadota</taxon>
        <taxon>Betaproteobacteria</taxon>
        <taxon>Neisseriales</taxon>
        <taxon>Neisseriaceae</taxon>
        <taxon>Neisseria</taxon>
    </lineage>
</organism>